<keyword id="KW-0012">Acyltransferase</keyword>
<keyword id="KW-1185">Reference proteome</keyword>
<keyword id="KW-0808">Transferase</keyword>
<comment type="function">
    <text evidence="1">Catalyzes the transfer of endogenously produced octanoic acid from octanoyl-acyl-carrier-protein onto the lipoyl domain of GcvH, an intermediate carrier during protein lipoylation.</text>
</comment>
<comment type="catalytic activity">
    <reaction evidence="1">
        <text>octanoyl-[ACP] + L-lysyl-[protein] = N(6)-octanoyl-L-lysyl-[protein] + holo-[ACP] + H(+)</text>
        <dbReference type="Rhea" id="RHEA:17665"/>
        <dbReference type="Rhea" id="RHEA-COMP:9636"/>
        <dbReference type="Rhea" id="RHEA-COMP:9685"/>
        <dbReference type="Rhea" id="RHEA-COMP:9752"/>
        <dbReference type="Rhea" id="RHEA-COMP:9928"/>
        <dbReference type="ChEBI" id="CHEBI:15378"/>
        <dbReference type="ChEBI" id="CHEBI:29969"/>
        <dbReference type="ChEBI" id="CHEBI:64479"/>
        <dbReference type="ChEBI" id="CHEBI:78463"/>
        <dbReference type="ChEBI" id="CHEBI:78809"/>
        <dbReference type="EC" id="2.3.1.181"/>
    </reaction>
</comment>
<comment type="pathway">
    <text evidence="1">Protein modification; protein lipoylation via endogenous pathway; protein N(6)-(lipoyl)lysine from octanoyl-[acyl-carrier-protein].</text>
</comment>
<comment type="subunit">
    <text evidence="1">Monomer.</text>
</comment>
<comment type="miscellaneous">
    <text evidence="1">In the reaction, the free carboxyl group of octanoic acid is attached via an amide linkage to the epsilon-amino group of a specific lysine residue of lipoyl domains of lipoate-dependent enzymes. The reaction proceeds via an octanoyl-thioester enzyme intermediate.</text>
</comment>
<comment type="similarity">
    <text evidence="1">Belongs to the octanoyltransferase LipM family.</text>
</comment>
<evidence type="ECO:0000255" key="1">
    <source>
        <dbReference type="HAMAP-Rule" id="MF_02118"/>
    </source>
</evidence>
<evidence type="ECO:0000255" key="2">
    <source>
        <dbReference type="PROSITE-ProRule" id="PRU01067"/>
    </source>
</evidence>
<proteinExistence type="inferred from homology"/>
<protein>
    <recommendedName>
        <fullName evidence="1">Octanoyltransferase LipM</fullName>
        <ecNumber evidence="1">2.3.1.181</ecNumber>
    </recommendedName>
    <alternativeName>
        <fullName evidence="1">Octanoyl-[acyl-carrier-protein]:[GcvH] N-octanoyltransferase</fullName>
    </alternativeName>
</protein>
<organism>
    <name type="scientific">Exiguobacterium sibiricum (strain DSM 17290 / CCUG 55495 / CIP 109462 / JCM 13490 / 255-15)</name>
    <dbReference type="NCBI Taxonomy" id="262543"/>
    <lineage>
        <taxon>Bacteria</taxon>
        <taxon>Bacillati</taxon>
        <taxon>Bacillota</taxon>
        <taxon>Bacilli</taxon>
        <taxon>Bacillales</taxon>
        <taxon>Bacillales Family XII. Incertae Sedis</taxon>
        <taxon>Exiguobacterium</taxon>
    </lineage>
</organism>
<gene>
    <name evidence="1" type="primary">lipM</name>
    <name type="ordered locus">Exig_0893</name>
</gene>
<accession>B1YLP0</accession>
<reference key="1">
    <citation type="submission" date="2008-04" db="EMBL/GenBank/DDBJ databases">
        <title>Complete sequence of chromosome of Exiguobacterium sibiricum 255-15.</title>
        <authorList>
            <consortium name="US DOE Joint Genome Institute"/>
            <person name="Copeland A."/>
            <person name="Lucas S."/>
            <person name="Lapidus A."/>
            <person name="Glavina del Rio T."/>
            <person name="Dalin E."/>
            <person name="Tice H."/>
            <person name="Bruce D."/>
            <person name="Goodwin L."/>
            <person name="Pitluck S."/>
            <person name="Kiss H."/>
            <person name="Chertkov O."/>
            <person name="Monk C."/>
            <person name="Brettin T."/>
            <person name="Detter J.C."/>
            <person name="Han C."/>
            <person name="Kuske C.R."/>
            <person name="Schmutz J."/>
            <person name="Larimer F."/>
            <person name="Land M."/>
            <person name="Hauser L."/>
            <person name="Kyrpides N."/>
            <person name="Mikhailova N."/>
            <person name="Vishnivetskaya T."/>
            <person name="Rodrigues D.F."/>
            <person name="Gilichinsky D."/>
            <person name="Tiedje J."/>
            <person name="Richardson P."/>
        </authorList>
    </citation>
    <scope>NUCLEOTIDE SEQUENCE [LARGE SCALE GENOMIC DNA]</scope>
    <source>
        <strain>DSM 17290 / CCUG 55495 / CIP 109462 / JCM 13490 / 255-15</strain>
    </source>
</reference>
<sequence length="276" mass="31657">MIREWQVLTTERMEPALNMAIDEALIGFVGRGEVAPTLRFYSWEPRGLSVGHFQRATKDIDRNRIEALGIPIVRRMTGGRAVLHADELTYSVILPEQMEGVPKTVIESYRMLTEGIRKGYHHLGIPVEFSVPMTEEEKEELRKPKSAVCFDAASYYELAVGKRKVAGSAQVRHQGVVLQHGSVPLSVDEGELFDCFLYEDETMRERMKARFAGKAVALNELAGRSVSFEEVRLAFVKGFEDALQLTFRPLEFNSTQWQEIERLAEKYRSEEWNWKR</sequence>
<feature type="chain" id="PRO_0000410856" description="Octanoyltransferase LipM">
    <location>
        <begin position="1"/>
        <end position="276"/>
    </location>
</feature>
<feature type="domain" description="BPL/LPL catalytic" evidence="2">
    <location>
        <begin position="32"/>
        <end position="247"/>
    </location>
</feature>
<feature type="active site" description="Acyl-thioester intermediate" evidence="1">
    <location>
        <position position="149"/>
    </location>
</feature>
<feature type="site" description="Lowers pKa of active site Cys" evidence="1">
    <location>
        <position position="164"/>
    </location>
</feature>
<dbReference type="EC" id="2.3.1.181" evidence="1"/>
<dbReference type="EMBL" id="CP001022">
    <property type="protein sequence ID" value="ACB60373.1"/>
    <property type="molecule type" value="Genomic_DNA"/>
</dbReference>
<dbReference type="SMR" id="B1YLP0"/>
<dbReference type="STRING" id="262543.Exig_0893"/>
<dbReference type="KEGG" id="esi:Exig_0893"/>
<dbReference type="eggNOG" id="COG0095">
    <property type="taxonomic scope" value="Bacteria"/>
</dbReference>
<dbReference type="HOGENOM" id="CLU_022986_5_0_9"/>
<dbReference type="OrthoDB" id="9774653at2"/>
<dbReference type="Proteomes" id="UP000001681">
    <property type="component" value="Chromosome"/>
</dbReference>
<dbReference type="GO" id="GO:0033819">
    <property type="term" value="F:lipoyl(octanoyl) transferase activity"/>
    <property type="evidence" value="ECO:0007669"/>
    <property type="project" value="UniProtKB-UniRule"/>
</dbReference>
<dbReference type="GO" id="GO:0009107">
    <property type="term" value="P:lipoate biosynthetic process"/>
    <property type="evidence" value="ECO:0007669"/>
    <property type="project" value="UniProtKB-UniRule"/>
</dbReference>
<dbReference type="GO" id="GO:0036211">
    <property type="term" value="P:protein modification process"/>
    <property type="evidence" value="ECO:0007669"/>
    <property type="project" value="InterPro"/>
</dbReference>
<dbReference type="CDD" id="cd16443">
    <property type="entry name" value="LplA"/>
    <property type="match status" value="1"/>
</dbReference>
<dbReference type="Gene3D" id="3.30.930.10">
    <property type="entry name" value="Bira Bifunctional Protein, Domain 2"/>
    <property type="match status" value="1"/>
</dbReference>
<dbReference type="HAMAP" id="MF_02118">
    <property type="entry name" value="LipM"/>
    <property type="match status" value="1"/>
</dbReference>
<dbReference type="InterPro" id="IPR045864">
    <property type="entry name" value="aa-tRNA-synth_II/BPL/LPL"/>
</dbReference>
<dbReference type="InterPro" id="IPR004143">
    <property type="entry name" value="BPL_LPL_catalytic"/>
</dbReference>
<dbReference type="InterPro" id="IPR024898">
    <property type="entry name" value="LipM"/>
</dbReference>
<dbReference type="InterPro" id="IPR050664">
    <property type="entry name" value="Octanoyltrans_LipM/LipL"/>
</dbReference>
<dbReference type="PANTHER" id="PTHR43679:SF2">
    <property type="entry name" value="OCTANOYL-[GCVH]:PROTEIN N-OCTANOYLTRANSFERASE"/>
    <property type="match status" value="1"/>
</dbReference>
<dbReference type="PANTHER" id="PTHR43679">
    <property type="entry name" value="OCTANOYLTRANSFERASE LIPM-RELATED"/>
    <property type="match status" value="1"/>
</dbReference>
<dbReference type="Pfam" id="PF21948">
    <property type="entry name" value="LplA-B_cat"/>
    <property type="match status" value="1"/>
</dbReference>
<dbReference type="SUPFAM" id="SSF55681">
    <property type="entry name" value="Class II aaRS and biotin synthetases"/>
    <property type="match status" value="1"/>
</dbReference>
<dbReference type="PROSITE" id="PS51733">
    <property type="entry name" value="BPL_LPL_CATALYTIC"/>
    <property type="match status" value="1"/>
</dbReference>
<name>LIPM_EXIS2</name>